<name>C76K6_SALPM</name>
<gene>
    <name evidence="7" type="primary">CYP76AK6</name>
</gene>
<comment type="function">
    <text evidence="1 2 6">Monooxygenase involved in the biosynthesis of carnosate, a potent antioxidant labdane-related diterpene natural product (PubMed:26976595). Catalyzes the oxidation of 11-hydroxyferruginol to produce carnosate (PubMed:26976595). Mediates the conversion of miltiradien into miltiradien-20-al (By similarity). Also involved in the production of pisiferic acid and derivative products from ferruginol (By similarity).</text>
</comment>
<comment type="catalytic activity">
    <reaction evidence="6">
        <text>11-hydroxyferruginol + 3 reduced [NADPH--hemoprotein reductase] + 3 O2 = carnosate + 3 oxidized [NADPH--hemoprotein reductase] + 4 H2O + 4 H(+)</text>
        <dbReference type="Rhea" id="RHEA:55432"/>
        <dbReference type="Rhea" id="RHEA-COMP:11964"/>
        <dbReference type="Rhea" id="RHEA-COMP:11965"/>
        <dbReference type="ChEBI" id="CHEBI:15377"/>
        <dbReference type="ChEBI" id="CHEBI:15378"/>
        <dbReference type="ChEBI" id="CHEBI:15379"/>
        <dbReference type="ChEBI" id="CHEBI:57618"/>
        <dbReference type="ChEBI" id="CHEBI:58210"/>
        <dbReference type="ChEBI" id="CHEBI:138942"/>
        <dbReference type="ChEBI" id="CHEBI:138943"/>
        <dbReference type="EC" id="1.14.14.61"/>
    </reaction>
    <physiologicalReaction direction="left-to-right" evidence="6">
        <dbReference type="Rhea" id="RHEA:55433"/>
    </physiologicalReaction>
</comment>
<comment type="catalytic activity">
    <reaction evidence="1">
        <text>miltiradiene + 2 reduced [NADPH--hemoprotein reductase] + 2 O2 = miltiradien-20-al + 2 oxidized [NADPH--hemoprotein reductase] + 3 H2O + 2 H(+)</text>
        <dbReference type="Rhea" id="RHEA:66800"/>
        <dbReference type="Rhea" id="RHEA-COMP:11964"/>
        <dbReference type="Rhea" id="RHEA-COMP:11965"/>
        <dbReference type="ChEBI" id="CHEBI:15377"/>
        <dbReference type="ChEBI" id="CHEBI:15378"/>
        <dbReference type="ChEBI" id="CHEBI:15379"/>
        <dbReference type="ChEBI" id="CHEBI:57618"/>
        <dbReference type="ChEBI" id="CHEBI:58210"/>
        <dbReference type="ChEBI" id="CHEBI:65037"/>
        <dbReference type="ChEBI" id="CHEBI:167488"/>
    </reaction>
    <physiologicalReaction direction="left-to-right" evidence="1">
        <dbReference type="Rhea" id="RHEA:66801"/>
    </physiologicalReaction>
</comment>
<comment type="catalytic activity">
    <reaction evidence="2">
        <text>ferruginol + 3 reduced [NADPH--hemoprotein reductase] + 3 O2 = pisiferate + 3 oxidized [NADPH--hemoprotein reductase] + 4 H2O + 4 H(+)</text>
        <dbReference type="Rhea" id="RHEA:66804"/>
        <dbReference type="Rhea" id="RHEA-COMP:11964"/>
        <dbReference type="Rhea" id="RHEA-COMP:11965"/>
        <dbReference type="ChEBI" id="CHEBI:15377"/>
        <dbReference type="ChEBI" id="CHEBI:15378"/>
        <dbReference type="ChEBI" id="CHEBI:15379"/>
        <dbReference type="ChEBI" id="CHEBI:57618"/>
        <dbReference type="ChEBI" id="CHEBI:58210"/>
        <dbReference type="ChEBI" id="CHEBI:78274"/>
        <dbReference type="ChEBI" id="CHEBI:167487"/>
    </reaction>
    <physiologicalReaction direction="left-to-right" evidence="2">
        <dbReference type="Rhea" id="RHEA:66805"/>
    </physiologicalReaction>
</comment>
<comment type="cofactor">
    <cofactor evidence="3">
        <name>heme</name>
        <dbReference type="ChEBI" id="CHEBI:30413"/>
    </cofactor>
</comment>
<comment type="pathway">
    <text evidence="9">Secondary metabolite biosynthesis; terpenoid biosynthesis.</text>
</comment>
<comment type="subcellular location">
    <subcellularLocation>
        <location evidence="4">Membrane</location>
        <topology evidence="4">Single-pass membrane protein</topology>
    </subcellularLocation>
</comment>
<comment type="tissue specificity">
    <text evidence="5">Expressed in leaf glandular trichomes.</text>
</comment>
<comment type="similarity">
    <text evidence="8">Belongs to the cytochrome P450 family.</text>
</comment>
<sequence>MQVLILLSLAFLASCVVAYSRRRPGGRGAGDLPPGPPRLPIIGNMLQLGQNPHKSLAHLAKTYGPLMSLKLGNQFVVVVSSPEMAREVLQRHGLVFSRPFTPIAVQILGHGEVSMNMLPATSPIWKKIRKIAREKLFSNQALHATRAVRRERLRKLADYVGRCSGAMNVGEATFTTMSNLMFATLFSVEITQYADSDSDSGVNKKFREHVNAITRYMGVPNIADFFPIFAPFDPQGLRRKLTYHLGSLLELVQSLIEQRLRARNAATYRKKDDFLEMLLDLSEGDEYDLSVNEIKHLCVDLIIAGSDTSAATTEWAMVELLLHPDKLAKLKAELKSVVGDKSIIEESDISKLPYLQATVKEVLRYHPAAPLLAPHLAEEETQLNGYIIPKNTKIFINDWTISRDPSIWKNPEMFEPERFLNNDIDFCGQHFELIPFGSGRRICPGLPLASRMLHCMVATLCHNFDWELEKGTESKQLQREDVFGLALQKKIPLRAIPIKV</sequence>
<dbReference type="EC" id="1.14.14.61" evidence="6"/>
<dbReference type="EC" id="1.14.14.-" evidence="1 2"/>
<dbReference type="EMBL" id="KT157045">
    <property type="protein sequence ID" value="ALM25797.1"/>
    <property type="molecule type" value="mRNA"/>
</dbReference>
<dbReference type="SMR" id="A0A0S1TPC7"/>
<dbReference type="KEGG" id="ag:ALM25797"/>
<dbReference type="BRENDA" id="1.14.14.61">
    <property type="organism ID" value="15442"/>
</dbReference>
<dbReference type="UniPathway" id="UPA00213"/>
<dbReference type="GO" id="GO:0016020">
    <property type="term" value="C:membrane"/>
    <property type="evidence" value="ECO:0007669"/>
    <property type="project" value="UniProtKB-SubCell"/>
</dbReference>
<dbReference type="GO" id="GO:0020037">
    <property type="term" value="F:heme binding"/>
    <property type="evidence" value="ECO:0007669"/>
    <property type="project" value="InterPro"/>
</dbReference>
<dbReference type="GO" id="GO:0005506">
    <property type="term" value="F:iron ion binding"/>
    <property type="evidence" value="ECO:0007669"/>
    <property type="project" value="InterPro"/>
</dbReference>
<dbReference type="GO" id="GO:0016712">
    <property type="term" value="F:oxidoreductase activity, acting on paired donors, with incorporation or reduction of molecular oxygen, reduced flavin or flavoprotein as one donor, and incorporation of one atom of oxygen"/>
    <property type="evidence" value="ECO:0000314"/>
    <property type="project" value="UniProtKB"/>
</dbReference>
<dbReference type="GO" id="GO:0016102">
    <property type="term" value="P:diterpenoid biosynthetic process"/>
    <property type="evidence" value="ECO:0000314"/>
    <property type="project" value="UniProtKB"/>
</dbReference>
<dbReference type="CDD" id="cd11073">
    <property type="entry name" value="CYP76-like"/>
    <property type="match status" value="1"/>
</dbReference>
<dbReference type="FunFam" id="1.10.630.10:FF:000007">
    <property type="entry name" value="Cytochrome P450 76C4"/>
    <property type="match status" value="1"/>
</dbReference>
<dbReference type="Gene3D" id="1.10.630.10">
    <property type="entry name" value="Cytochrome P450"/>
    <property type="match status" value="1"/>
</dbReference>
<dbReference type="InterPro" id="IPR001128">
    <property type="entry name" value="Cyt_P450"/>
</dbReference>
<dbReference type="InterPro" id="IPR017972">
    <property type="entry name" value="Cyt_P450_CS"/>
</dbReference>
<dbReference type="InterPro" id="IPR002401">
    <property type="entry name" value="Cyt_P450_E_grp-I"/>
</dbReference>
<dbReference type="InterPro" id="IPR036396">
    <property type="entry name" value="Cyt_P450_sf"/>
</dbReference>
<dbReference type="PANTHER" id="PTHR47950">
    <property type="entry name" value="CYTOCHROME P450, FAMILY 76, SUBFAMILY C, POLYPEPTIDE 5-RELATED"/>
    <property type="match status" value="1"/>
</dbReference>
<dbReference type="PANTHER" id="PTHR47950:SF4">
    <property type="entry name" value="GERANIOL 8-HYDROXYLASE-LIKE"/>
    <property type="match status" value="1"/>
</dbReference>
<dbReference type="Pfam" id="PF00067">
    <property type="entry name" value="p450"/>
    <property type="match status" value="1"/>
</dbReference>
<dbReference type="PRINTS" id="PR00463">
    <property type="entry name" value="EP450I"/>
</dbReference>
<dbReference type="PRINTS" id="PR00385">
    <property type="entry name" value="P450"/>
</dbReference>
<dbReference type="SUPFAM" id="SSF48264">
    <property type="entry name" value="Cytochrome P450"/>
    <property type="match status" value="1"/>
</dbReference>
<dbReference type="PROSITE" id="PS00086">
    <property type="entry name" value="CYTOCHROME_P450"/>
    <property type="match status" value="1"/>
</dbReference>
<reference key="1">
    <citation type="journal article" date="2015" name="BMC Genomics">
        <title>Combined metabolome and transcriptome profiling provides new insights into diterpene biosynthesis in S. pomifera glandular trichomes.</title>
        <authorList>
            <person name="Trikka F.A."/>
            <person name="Nikolaidis A."/>
            <person name="Ignea C."/>
            <person name="Tsaballa A."/>
            <person name="Tziveleka L.A."/>
            <person name="Ioannou E."/>
            <person name="Roussis V."/>
            <person name="Stea E.A."/>
            <person name="Bozic D."/>
            <person name="Argiriou A."/>
            <person name="Kanellis A.K."/>
            <person name="Kampranis S.C."/>
            <person name="Makris A.M."/>
        </authorList>
    </citation>
    <scope>NUCLEOTIDE SEQUENCE [MRNA]</scope>
    <scope>TISSUE SPECIFICITY</scope>
    <source>
        <tissue>Trichome gland</tissue>
    </source>
</reference>
<reference key="2">
    <citation type="journal article" date="2016" name="Proc. Natl. Acad. Sci. U.S.A.">
        <title>Carnosic acid biosynthesis elucidated by a synthetic biology platform.</title>
        <authorList>
            <person name="Ignea C."/>
            <person name="Athanasakoglou A."/>
            <person name="Ioannou E."/>
            <person name="Georgantea P."/>
            <person name="Trikka F.A."/>
            <person name="Loupassaki S."/>
            <person name="Roussis V."/>
            <person name="Makris A.M."/>
            <person name="Kampranis S.C."/>
        </authorList>
    </citation>
    <scope>FUNCTION</scope>
    <scope>CATALYTIC ACTIVITY</scope>
</reference>
<reference key="3">
    <citation type="journal article" date="2019" name="Nat. Prod. Rep.">
        <title>Non-volatile natural products in plant glandular trichomes: chemistry, biological activities and biosynthesis.</title>
        <authorList>
            <person name="Liu Y."/>
            <person name="Jing S.-X."/>
            <person name="Luo S.-H."/>
            <person name="Li S.-H."/>
        </authorList>
    </citation>
    <scope>PATHWAY</scope>
    <scope>REVIEW</scope>
</reference>
<evidence type="ECO:0000250" key="1">
    <source>
        <dbReference type="UniProtKB" id="A0A1D8QMD1"/>
    </source>
</evidence>
<evidence type="ECO:0000250" key="2">
    <source>
        <dbReference type="UniProtKB" id="A0A1D8QMG4"/>
    </source>
</evidence>
<evidence type="ECO:0000250" key="3">
    <source>
        <dbReference type="UniProtKB" id="Q94IP1"/>
    </source>
</evidence>
<evidence type="ECO:0000255" key="4"/>
<evidence type="ECO:0000269" key="5">
    <source>
    </source>
</evidence>
<evidence type="ECO:0000269" key="6">
    <source>
    </source>
</evidence>
<evidence type="ECO:0000303" key="7">
    <source>
    </source>
</evidence>
<evidence type="ECO:0000305" key="8"/>
<evidence type="ECO:0000305" key="9">
    <source>
    </source>
</evidence>
<proteinExistence type="evidence at protein level"/>
<protein>
    <recommendedName>
        <fullName evidence="8">Carnosic acid synthase</fullName>
        <ecNumber evidence="6">1.14.14.61</ecNumber>
    </recommendedName>
    <alternativeName>
        <fullName evidence="7">Cytochrome P450 76AK6</fullName>
        <shortName evidence="7">SpCYP76AK6</shortName>
    </alternativeName>
    <alternativeName>
        <fullName evidence="8">Miltiradien-20-al synthase</fullName>
        <ecNumber evidence="1">1.14.14.-</ecNumber>
    </alternativeName>
    <alternativeName>
        <fullName evidence="8">Pisiferic acid synthase</fullName>
        <ecNumber evidence="2">1.14.14.-</ecNumber>
    </alternativeName>
</protein>
<feature type="chain" id="PRO_5006591041" description="Carnosic acid synthase">
    <location>
        <begin position="1"/>
        <end position="500"/>
    </location>
</feature>
<feature type="transmembrane region" description="Helical" evidence="4">
    <location>
        <begin position="4"/>
        <end position="24"/>
    </location>
</feature>
<feature type="binding site" description="axial binding residue" evidence="3">
    <location>
        <position position="443"/>
    </location>
    <ligand>
        <name>heme</name>
        <dbReference type="ChEBI" id="CHEBI:30413"/>
    </ligand>
    <ligandPart>
        <name>Fe</name>
        <dbReference type="ChEBI" id="CHEBI:18248"/>
    </ligandPart>
</feature>
<keyword id="KW-0349">Heme</keyword>
<keyword id="KW-0408">Iron</keyword>
<keyword id="KW-0472">Membrane</keyword>
<keyword id="KW-0479">Metal-binding</keyword>
<keyword id="KW-0503">Monooxygenase</keyword>
<keyword id="KW-0560">Oxidoreductase</keyword>
<keyword id="KW-0812">Transmembrane</keyword>
<keyword id="KW-1133">Transmembrane helix</keyword>
<organism>
    <name type="scientific">Salvia pomifera</name>
    <name type="common">Apple sage</name>
    <dbReference type="NCBI Taxonomy" id="396869"/>
    <lineage>
        <taxon>Eukaryota</taxon>
        <taxon>Viridiplantae</taxon>
        <taxon>Streptophyta</taxon>
        <taxon>Embryophyta</taxon>
        <taxon>Tracheophyta</taxon>
        <taxon>Spermatophyta</taxon>
        <taxon>Magnoliopsida</taxon>
        <taxon>eudicotyledons</taxon>
        <taxon>Gunneridae</taxon>
        <taxon>Pentapetalae</taxon>
        <taxon>asterids</taxon>
        <taxon>lamiids</taxon>
        <taxon>Lamiales</taxon>
        <taxon>Lamiaceae</taxon>
        <taxon>Nepetoideae</taxon>
        <taxon>Mentheae</taxon>
        <taxon>Salviinae</taxon>
        <taxon>Salvia</taxon>
        <taxon>Salvia incertae sedis</taxon>
    </lineage>
</organism>
<accession>A0A0S1TPC7</accession>